<gene>
    <name evidence="2" type="primary">psbA2</name>
    <name type="synonym">psbA-2</name>
    <name type="synonym">psbAII</name>
    <name type="ordered locus">alr3727</name>
</gene>
<gene>
    <name evidence="2" type="primary">psbA3</name>
    <name type="synonym">psbA-3</name>
    <name type="synonym">psbAIII</name>
    <name type="ordered locus">alr4592</name>
</gene>
<gene>
    <name evidence="2" type="primary">psbA4</name>
    <name type="synonym">psbA-4</name>
    <name type="synonym">psbAIV</name>
    <name type="ordered locus">all3572</name>
</gene>
<proteinExistence type="inferred from homology"/>
<dbReference type="EC" id="1.10.3.9" evidence="1"/>
<dbReference type="EMBL" id="U21332">
    <property type="protein sequence ID" value="AAA63703.1"/>
    <property type="molecule type" value="Genomic_DNA"/>
</dbReference>
<dbReference type="EMBL" id="U21333">
    <property type="protein sequence ID" value="AAA63704.1"/>
    <property type="molecule type" value="Genomic_DNA"/>
</dbReference>
<dbReference type="EMBL" id="U21334">
    <property type="protein sequence ID" value="AAA63705.1"/>
    <property type="molecule type" value="Genomic_DNA"/>
</dbReference>
<dbReference type="EMBL" id="BA000019">
    <property type="protein sequence ID" value="BAB75271.1"/>
    <property type="molecule type" value="Genomic_DNA"/>
</dbReference>
<dbReference type="EMBL" id="BA000019">
    <property type="protein sequence ID" value="BAB75426.1"/>
    <property type="molecule type" value="Genomic_DNA"/>
</dbReference>
<dbReference type="EMBL" id="BA000019">
    <property type="protein sequence ID" value="BAB76291.1"/>
    <property type="molecule type" value="Genomic_DNA"/>
</dbReference>
<dbReference type="PIR" id="AE2252">
    <property type="entry name" value="AE2252"/>
</dbReference>
<dbReference type="PIR" id="AH2271">
    <property type="entry name" value="AH2271"/>
</dbReference>
<dbReference type="PIR" id="AH2379">
    <property type="entry name" value="AH2379"/>
</dbReference>
<dbReference type="PIR" id="S11849">
    <property type="entry name" value="F2AI17"/>
</dbReference>
<dbReference type="RefSeq" id="WP_010997721.1">
    <property type="nucleotide sequence ID" value="NC_003272.1"/>
</dbReference>
<dbReference type="SMR" id="P31694"/>
<dbReference type="STRING" id="103690.gene:10495613"/>
<dbReference type="KEGG" id="ana:all3572"/>
<dbReference type="KEGG" id="ana:alr3727"/>
<dbReference type="KEGG" id="ana:alr4592"/>
<dbReference type="eggNOG" id="ENOG502Z87P">
    <property type="taxonomic scope" value="Bacteria"/>
</dbReference>
<dbReference type="OrthoDB" id="505356at2"/>
<dbReference type="Proteomes" id="UP000002483">
    <property type="component" value="Chromosome"/>
</dbReference>
<dbReference type="GO" id="GO:0009523">
    <property type="term" value="C:photosystem II"/>
    <property type="evidence" value="ECO:0007669"/>
    <property type="project" value="UniProtKB-KW"/>
</dbReference>
<dbReference type="GO" id="GO:0031676">
    <property type="term" value="C:plasma membrane-derived thylakoid membrane"/>
    <property type="evidence" value="ECO:0007669"/>
    <property type="project" value="UniProtKB-SubCell"/>
</dbReference>
<dbReference type="GO" id="GO:0016168">
    <property type="term" value="F:chlorophyll binding"/>
    <property type="evidence" value="ECO:0007669"/>
    <property type="project" value="UniProtKB-UniRule"/>
</dbReference>
<dbReference type="GO" id="GO:0045156">
    <property type="term" value="F:electron transporter, transferring electrons within the cyclic electron transport pathway of photosynthesis activity"/>
    <property type="evidence" value="ECO:0007669"/>
    <property type="project" value="InterPro"/>
</dbReference>
<dbReference type="GO" id="GO:0005506">
    <property type="term" value="F:iron ion binding"/>
    <property type="evidence" value="ECO:0007669"/>
    <property type="project" value="UniProtKB-UniRule"/>
</dbReference>
<dbReference type="GO" id="GO:0016682">
    <property type="term" value="F:oxidoreductase activity, acting on diphenols and related substances as donors, oxygen as acceptor"/>
    <property type="evidence" value="ECO:0007669"/>
    <property type="project" value="UniProtKB-UniRule"/>
</dbReference>
<dbReference type="GO" id="GO:0010242">
    <property type="term" value="F:oxygen evolving activity"/>
    <property type="evidence" value="ECO:0007669"/>
    <property type="project" value="UniProtKB-EC"/>
</dbReference>
<dbReference type="GO" id="GO:0009772">
    <property type="term" value="P:photosynthetic electron transport in photosystem II"/>
    <property type="evidence" value="ECO:0007669"/>
    <property type="project" value="InterPro"/>
</dbReference>
<dbReference type="GO" id="GO:0009635">
    <property type="term" value="P:response to herbicide"/>
    <property type="evidence" value="ECO:0007669"/>
    <property type="project" value="UniProtKB-KW"/>
</dbReference>
<dbReference type="CDD" id="cd09289">
    <property type="entry name" value="Photosystem-II_D1"/>
    <property type="match status" value="1"/>
</dbReference>
<dbReference type="FunFam" id="1.20.85.10:FF:000002">
    <property type="entry name" value="Photosystem II protein D1"/>
    <property type="match status" value="1"/>
</dbReference>
<dbReference type="Gene3D" id="1.20.85.10">
    <property type="entry name" value="Photosystem II protein D1-like"/>
    <property type="match status" value="1"/>
</dbReference>
<dbReference type="HAMAP" id="MF_01379">
    <property type="entry name" value="PSII_PsbA_D1"/>
    <property type="match status" value="1"/>
</dbReference>
<dbReference type="InterPro" id="IPR055266">
    <property type="entry name" value="D1/D2"/>
</dbReference>
<dbReference type="InterPro" id="IPR036854">
    <property type="entry name" value="Photo_II_D1/D2_sf"/>
</dbReference>
<dbReference type="InterPro" id="IPR000484">
    <property type="entry name" value="Photo_RC_L/M"/>
</dbReference>
<dbReference type="InterPro" id="IPR055265">
    <property type="entry name" value="Photo_RC_L/M_CS"/>
</dbReference>
<dbReference type="InterPro" id="IPR005867">
    <property type="entry name" value="PSII_D1"/>
</dbReference>
<dbReference type="NCBIfam" id="TIGR01151">
    <property type="entry name" value="psbA"/>
    <property type="match status" value="1"/>
</dbReference>
<dbReference type="PANTHER" id="PTHR33149:SF12">
    <property type="entry name" value="PHOTOSYSTEM II D2 PROTEIN"/>
    <property type="match status" value="1"/>
</dbReference>
<dbReference type="PANTHER" id="PTHR33149">
    <property type="entry name" value="PHOTOSYSTEM II PROTEIN D1"/>
    <property type="match status" value="1"/>
</dbReference>
<dbReference type="Pfam" id="PF00124">
    <property type="entry name" value="Photo_RC"/>
    <property type="match status" value="1"/>
</dbReference>
<dbReference type="PRINTS" id="PR00256">
    <property type="entry name" value="REACTNCENTRE"/>
</dbReference>
<dbReference type="SUPFAM" id="SSF81483">
    <property type="entry name" value="Bacterial photosystem II reaction centre, L and M subunits"/>
    <property type="match status" value="1"/>
</dbReference>
<dbReference type="PROSITE" id="PS00244">
    <property type="entry name" value="REACTION_CENTER"/>
    <property type="match status" value="1"/>
</dbReference>
<protein>
    <recommendedName>
        <fullName evidence="1">Photosystem II protein D1 2</fullName>
        <shortName evidence="1">PSII D1 protein 2</shortName>
        <ecNumber evidence="1">1.10.3.9</ecNumber>
    </recommendedName>
    <alternativeName>
        <fullName evidence="1">Photosystem II Q(B) protein 2</fullName>
    </alternativeName>
</protein>
<accession>P31694</accession>
<sequence>MTATLQQRKSANVWEQFCEWITSTNNRLYIGWFGVLMIPTLLAATTCFIIAFIAAPPVDIDGIREPVAGSLIYGNNIISGAVVPSSNAIGLHFYPIWEAASLDEWLYNGGPYQLVIFHFLTGVFCYLGREWELSYRLGMRPWICLAFSAPVAAATAVFLIYPIGQGSFSDGMPLGISGTFNFMIVFQAEHNILMHPFHMLGVAGVFGGSLFSAMHGSLVTSSLVRETTENESQNYGYKFGQEEETYNIVAAHGYFGRLIFQYASFNNSRQLHFFLAAWPVIGIWFTALGVSTMAFNLNGFNFNQSIIDSQGRVINTWADIINRANLGMEVMHERNAHNFPLDLAAGEVAPVAISAPAING</sequence>
<organism>
    <name type="scientific">Nostoc sp. (strain PCC 7120 / SAG 25.82 / UTEX 2576)</name>
    <dbReference type="NCBI Taxonomy" id="103690"/>
    <lineage>
        <taxon>Bacteria</taxon>
        <taxon>Bacillati</taxon>
        <taxon>Cyanobacteriota</taxon>
        <taxon>Cyanophyceae</taxon>
        <taxon>Nostocales</taxon>
        <taxon>Nostocaceae</taxon>
        <taxon>Nostoc</taxon>
    </lineage>
</organism>
<reference key="1">
    <citation type="journal article" date="1990" name="Plant Mol. Biol.">
        <title>Characterization of a four-member psbA gene family from the cyanobacterium Anabaena PCC 7120.</title>
        <authorList>
            <person name="Vrba J.M."/>
            <person name="Curtis S.E."/>
        </authorList>
    </citation>
    <scope>NUCLEOTIDE SEQUENCE [GENOMIC DNA]</scope>
</reference>
<reference key="2">
    <citation type="journal article" date="2001" name="DNA Res.">
        <title>Complete genomic sequence of the filamentous nitrogen-fixing cyanobacterium Anabaena sp. strain PCC 7120.</title>
        <authorList>
            <person name="Kaneko T."/>
            <person name="Nakamura Y."/>
            <person name="Wolk C.P."/>
            <person name="Kuritz T."/>
            <person name="Sasamoto S."/>
            <person name="Watanabe A."/>
            <person name="Iriguchi M."/>
            <person name="Ishikawa A."/>
            <person name="Kawashima K."/>
            <person name="Kimura T."/>
            <person name="Kishida Y."/>
            <person name="Kohara M."/>
            <person name="Matsumoto M."/>
            <person name="Matsuno A."/>
            <person name="Muraki A."/>
            <person name="Nakazaki N."/>
            <person name="Shimpo S."/>
            <person name="Sugimoto M."/>
            <person name="Takazawa M."/>
            <person name="Yamada M."/>
            <person name="Yasuda M."/>
            <person name="Tabata S."/>
        </authorList>
    </citation>
    <scope>NUCLEOTIDE SEQUENCE [LARGE SCALE GENOMIC DNA]</scope>
    <source>
        <strain>PCC 7120 / SAG 25.82 / UTEX 2576</strain>
    </source>
</reference>
<keyword id="KW-0106">Calcium</keyword>
<keyword id="KW-0148">Chlorophyll</keyword>
<keyword id="KW-0157">Chromophore</keyword>
<keyword id="KW-0249">Electron transport</keyword>
<keyword id="KW-0359">Herbicide resistance</keyword>
<keyword id="KW-0408">Iron</keyword>
<keyword id="KW-0460">Magnesium</keyword>
<keyword id="KW-0464">Manganese</keyword>
<keyword id="KW-0472">Membrane</keyword>
<keyword id="KW-0479">Metal-binding</keyword>
<keyword id="KW-0560">Oxidoreductase</keyword>
<keyword id="KW-0602">Photosynthesis</keyword>
<keyword id="KW-0604">Photosystem II</keyword>
<keyword id="KW-1185">Reference proteome</keyword>
<keyword id="KW-0793">Thylakoid</keyword>
<keyword id="KW-0812">Transmembrane</keyword>
<keyword id="KW-1133">Transmembrane helix</keyword>
<keyword id="KW-0813">Transport</keyword>
<feature type="chain" id="PRO_0000090479" description="Photosystem II protein D1 2">
    <location>
        <begin position="1"/>
        <end position="344"/>
    </location>
</feature>
<feature type="propeptide" id="PRO_0000316337" evidence="1">
    <location>
        <begin position="345"/>
        <end position="360"/>
    </location>
</feature>
<feature type="transmembrane region" description="Helical" evidence="1">
    <location>
        <begin position="29"/>
        <end position="46"/>
    </location>
</feature>
<feature type="transmembrane region" description="Helical" evidence="1">
    <location>
        <begin position="118"/>
        <end position="133"/>
    </location>
</feature>
<feature type="transmembrane region" description="Helical" evidence="1">
    <location>
        <begin position="142"/>
        <end position="156"/>
    </location>
</feature>
<feature type="transmembrane region" description="Helical" evidence="1">
    <location>
        <begin position="197"/>
        <end position="218"/>
    </location>
</feature>
<feature type="transmembrane region" description="Helical" evidence="1">
    <location>
        <begin position="274"/>
        <end position="288"/>
    </location>
</feature>
<feature type="binding site" description="axial binding residue" evidence="1">
    <location>
        <position position="118"/>
    </location>
    <ligand>
        <name>chlorophyll a</name>
        <dbReference type="ChEBI" id="CHEBI:58416"/>
        <label>ChlzD1</label>
    </ligand>
    <ligandPart>
        <name>Mg</name>
        <dbReference type="ChEBI" id="CHEBI:25107"/>
    </ligandPart>
</feature>
<feature type="binding site" evidence="1">
    <location>
        <position position="126"/>
    </location>
    <ligand>
        <name>pheophytin a</name>
        <dbReference type="ChEBI" id="CHEBI:136840"/>
        <label>D1</label>
    </ligand>
</feature>
<feature type="binding site" evidence="1">
    <location>
        <position position="170"/>
    </location>
    <ligand>
        <name>[CaMn4O5] cluster</name>
        <dbReference type="ChEBI" id="CHEBI:189552"/>
    </ligand>
</feature>
<feature type="binding site" evidence="1">
    <location>
        <position position="189"/>
    </location>
    <ligand>
        <name>[CaMn4O5] cluster</name>
        <dbReference type="ChEBI" id="CHEBI:189552"/>
    </ligand>
</feature>
<feature type="binding site" description="axial binding residue" evidence="1">
    <location>
        <position position="198"/>
    </location>
    <ligand>
        <name>chlorophyll a</name>
        <dbReference type="ChEBI" id="CHEBI:58416"/>
        <label>PD1</label>
    </ligand>
    <ligandPart>
        <name>Mg</name>
        <dbReference type="ChEBI" id="CHEBI:25107"/>
    </ligandPart>
</feature>
<feature type="binding site" evidence="1">
    <location>
        <position position="215"/>
    </location>
    <ligand>
        <name>a quinone</name>
        <dbReference type="ChEBI" id="CHEBI:132124"/>
        <label>B</label>
    </ligand>
</feature>
<feature type="binding site" evidence="1">
    <location>
        <position position="215"/>
    </location>
    <ligand>
        <name>Fe cation</name>
        <dbReference type="ChEBI" id="CHEBI:24875"/>
        <note>ligand shared with heterodimeric partner</note>
    </ligand>
</feature>
<feature type="binding site" evidence="1">
    <location>
        <begin position="264"/>
        <end position="265"/>
    </location>
    <ligand>
        <name>a quinone</name>
        <dbReference type="ChEBI" id="CHEBI:132124"/>
        <label>B</label>
    </ligand>
</feature>
<feature type="binding site" evidence="1">
    <location>
        <position position="272"/>
    </location>
    <ligand>
        <name>Fe cation</name>
        <dbReference type="ChEBI" id="CHEBI:24875"/>
        <note>ligand shared with heterodimeric partner</note>
    </ligand>
</feature>
<feature type="binding site" evidence="1">
    <location>
        <position position="332"/>
    </location>
    <ligand>
        <name>[CaMn4O5] cluster</name>
        <dbReference type="ChEBI" id="CHEBI:189552"/>
    </ligand>
</feature>
<feature type="binding site" evidence="1">
    <location>
        <position position="333"/>
    </location>
    <ligand>
        <name>[CaMn4O5] cluster</name>
        <dbReference type="ChEBI" id="CHEBI:189552"/>
    </ligand>
</feature>
<feature type="binding site" evidence="1">
    <location>
        <position position="342"/>
    </location>
    <ligand>
        <name>[CaMn4O5] cluster</name>
        <dbReference type="ChEBI" id="CHEBI:189552"/>
    </ligand>
</feature>
<feature type="binding site" evidence="1">
    <location>
        <position position="344"/>
    </location>
    <ligand>
        <name>[CaMn4O5] cluster</name>
        <dbReference type="ChEBI" id="CHEBI:189552"/>
    </ligand>
</feature>
<feature type="site" description="Tyrosine radical intermediate" evidence="1">
    <location>
        <position position="161"/>
    </location>
</feature>
<feature type="site" description="Stabilizes free radical intermediate" evidence="1">
    <location>
        <position position="190"/>
    </location>
</feature>
<feature type="site" description="Cleavage; by CtpA" evidence="1">
    <location>
        <begin position="344"/>
        <end position="345"/>
    </location>
</feature>
<evidence type="ECO:0000255" key="1">
    <source>
        <dbReference type="HAMAP-Rule" id="MF_01379"/>
    </source>
</evidence>
<evidence type="ECO:0000305" key="2"/>
<comment type="function">
    <text evidence="1">Photosystem II (PSII) is a light-driven water:plastoquinone oxidoreductase that uses light energy to abstract electrons from H(2)O, generating O(2) and a proton gradient subsequently used for ATP formation. It consists of a core antenna complex that captures photons, and an electron transfer chain that converts photonic excitation into a charge separation. The D1/D2 (PsbA/PsbD) reaction center heterodimer binds P680, the primary electron donor of PSII as well as several subsequent electron acceptors.</text>
</comment>
<comment type="catalytic activity">
    <reaction evidence="1">
        <text>2 a plastoquinone + 4 hnu + 2 H2O = 2 a plastoquinol + O2</text>
        <dbReference type="Rhea" id="RHEA:36359"/>
        <dbReference type="Rhea" id="RHEA-COMP:9561"/>
        <dbReference type="Rhea" id="RHEA-COMP:9562"/>
        <dbReference type="ChEBI" id="CHEBI:15377"/>
        <dbReference type="ChEBI" id="CHEBI:15379"/>
        <dbReference type="ChEBI" id="CHEBI:17757"/>
        <dbReference type="ChEBI" id="CHEBI:30212"/>
        <dbReference type="ChEBI" id="CHEBI:62192"/>
        <dbReference type="EC" id="1.10.3.9"/>
    </reaction>
</comment>
<comment type="cofactor">
    <text evidence="1">The D1/D2 heterodimer binds P680, chlorophylls that are the primary electron donor of PSII, and subsequent electron acceptors. It shares a non-heme iron and each subunit binds pheophytin, quinone, additional chlorophylls, carotenoids and lipids. D1 provides most of the ligands for the Mn4-Ca-O5 cluster of the oxygen-evolving complex (OEC). There is also a Cl(-1) ion associated with D1 and D2, which is required for oxygen evolution. The PSII complex binds additional chlorophylls, carotenoids and specific lipids.</text>
</comment>
<comment type="subunit">
    <text evidence="1">PSII is composed of 1 copy each of membrane proteins PsbA, PsbB, PsbC, PsbD, PsbE, PsbF, PsbH, PsbI, PsbJ, PsbK, PsbL, PsbM, PsbT, PsbX, PsbY, PsbZ, Psb30/Ycf12, peripheral proteins PsbO, CyanoQ (PsbQ), PsbU, PsbV and a large number of cofactors. It forms dimeric complexes.</text>
</comment>
<comment type="subcellular location">
    <subcellularLocation>
        <location evidence="1">Cellular thylakoid membrane</location>
        <topology evidence="1">Multi-pass membrane protein</topology>
    </subcellularLocation>
</comment>
<comment type="PTM">
    <text evidence="1">Tyr-161 forms a radical intermediate that is referred to as redox-active TyrZ, YZ or Y-Z.</text>
</comment>
<comment type="PTM">
    <text evidence="1">C-terminally processed by CtpA; processing is essential to allow assembly of the oxygen-evolving complex and thus photosynthetic growth.</text>
</comment>
<comment type="miscellaneous">
    <text evidence="1">Cyanobacteria usually contain more than 2 copies of the psbA gene.</text>
</comment>
<comment type="miscellaneous">
    <text evidence="1">2 of the reaction center chlorophylls (ChlD1 and ChlD2) are entirely coordinated by water.</text>
</comment>
<comment type="miscellaneous">
    <text evidence="1">Herbicides such as atrazine, BNT, diuron or ioxynil bind in the Q(B) binding site and block subsequent electron transfer.</text>
</comment>
<comment type="similarity">
    <text evidence="1">Belongs to the reaction center PufL/M/PsbA/D family.</text>
</comment>
<name>PSBA2_NOSS1</name>